<gene>
    <name type="primary">ycf53</name>
</gene>
<name>YCF53_PYRYE</name>
<proteinExistence type="inferred from homology"/>
<geneLocation type="chloroplast"/>
<accession>Q1XDT5</accession>
<protein>
    <recommendedName>
        <fullName>Uncharacterized protein ycf53</fullName>
    </recommendedName>
</protein>
<organism>
    <name type="scientific">Pyropia yezoensis</name>
    <name type="common">Susabi-nori</name>
    <name type="synonym">Porphyra yezoensis</name>
    <dbReference type="NCBI Taxonomy" id="2788"/>
    <lineage>
        <taxon>Eukaryota</taxon>
        <taxon>Rhodophyta</taxon>
        <taxon>Bangiophyceae</taxon>
        <taxon>Bangiales</taxon>
        <taxon>Bangiaceae</taxon>
        <taxon>Pyropia</taxon>
    </lineage>
</organism>
<keyword id="KW-0150">Chloroplast</keyword>
<keyword id="KW-0934">Plastid</keyword>
<feature type="chain" id="PRO_0000277354" description="Uncharacterized protein ycf53">
    <location>
        <begin position="1"/>
        <end position="237"/>
    </location>
</feature>
<reference key="1">
    <citation type="submission" date="2003-11" db="EMBL/GenBank/DDBJ databases">
        <title>Whole genome sequence of Porphyra yezoensis chloroplast.</title>
        <authorList>
            <person name="Kunimoto M."/>
            <person name="Morishima K."/>
            <person name="Yoshikawa M."/>
            <person name="Fukuda S."/>
            <person name="Kobayashi T."/>
            <person name="Kobayashi M."/>
            <person name="Okazaki T."/>
            <person name="Ohara I."/>
            <person name="Nakayama I."/>
        </authorList>
    </citation>
    <scope>NUCLEOTIDE SEQUENCE [LARGE SCALE GENOMIC DNA]</scope>
    <source>
        <strain>U-51</strain>
    </source>
</reference>
<sequence length="237" mass="27719">MPNQIRAQLLELNKNTKSNNVKQQLEIIENINSNDSIELKDLADLFFERITGPNYKSNCVDGLIYEKLLNSKNQEIVKFASNLCPDGIVPLRSAQQMNYKDLQMLLTHRDLLKADQLTQQKLIQLAGVNAQTRNWLYFTDIKKIPAQDLQTIDKLWHTHSKGKFGLFVQRQIWLSVGKDWGKFWQKIGWEVDRIPCRYPEEFQWNSHGPRGHLPLFNQLRGVQVLSALFTHKAWENY</sequence>
<comment type="subcellular location">
    <subcellularLocation>
        <location>Plastid</location>
        <location>Chloroplast</location>
    </subcellularLocation>
</comment>
<comment type="similarity">
    <text evidence="1">Belongs to the ycf53 family.</text>
</comment>
<evidence type="ECO:0000305" key="1"/>
<dbReference type="EMBL" id="AP006715">
    <property type="protein sequence ID" value="BAE92326.1"/>
    <property type="molecule type" value="Genomic_DNA"/>
</dbReference>
<dbReference type="RefSeq" id="YP_536883.1">
    <property type="nucleotide sequence ID" value="NC_007932.1"/>
</dbReference>
<dbReference type="SMR" id="Q1XDT5"/>
<dbReference type="GO" id="GO:0009507">
    <property type="term" value="C:chloroplast"/>
    <property type="evidence" value="ECO:0007669"/>
    <property type="project" value="UniProtKB-SubCell"/>
</dbReference>
<dbReference type="GO" id="GO:0046906">
    <property type="term" value="F:tetrapyrrole binding"/>
    <property type="evidence" value="ECO:0007669"/>
    <property type="project" value="TreeGrafter"/>
</dbReference>
<dbReference type="CDD" id="cd16383">
    <property type="entry name" value="GUN4"/>
    <property type="match status" value="1"/>
</dbReference>
<dbReference type="Gene3D" id="1.25.40.620">
    <property type="match status" value="1"/>
</dbReference>
<dbReference type="Gene3D" id="1.10.10.1770">
    <property type="entry name" value="Gun4-like"/>
    <property type="match status" value="1"/>
</dbReference>
<dbReference type="InterPro" id="IPR008629">
    <property type="entry name" value="GUN4-like"/>
</dbReference>
<dbReference type="InterPro" id="IPR037215">
    <property type="entry name" value="GUN4-like_sf"/>
</dbReference>
<dbReference type="PANTHER" id="PTHR34800">
    <property type="entry name" value="TETRAPYRROLE-BINDING PROTEIN, CHLOROPLASTIC"/>
    <property type="match status" value="1"/>
</dbReference>
<dbReference type="PANTHER" id="PTHR34800:SF1">
    <property type="entry name" value="TETRAPYRROLE-BINDING PROTEIN, CHLOROPLASTIC"/>
    <property type="match status" value="1"/>
</dbReference>
<dbReference type="Pfam" id="PF05419">
    <property type="entry name" value="GUN4"/>
    <property type="match status" value="1"/>
</dbReference>
<dbReference type="SUPFAM" id="SSF140869">
    <property type="entry name" value="GUN4-like"/>
    <property type="match status" value="1"/>
</dbReference>